<feature type="chain" id="PRO_0000209577" description="Stress response kinase A">
    <location>
        <begin position="1"/>
        <end position="328"/>
    </location>
</feature>
<feature type="active site" description="Proton acceptor" evidence="1">
    <location>
        <position position="201"/>
    </location>
</feature>
<feature type="active site" evidence="1">
    <location>
        <position position="217"/>
    </location>
</feature>
<feature type="binding site" evidence="1">
    <location>
        <position position="206"/>
    </location>
    <ligand>
        <name>Mg(2+)</name>
        <dbReference type="ChEBI" id="CHEBI:18420"/>
    </ligand>
</feature>
<feature type="binding site" evidence="1">
    <location>
        <position position="217"/>
    </location>
    <ligand>
        <name>Mg(2+)</name>
        <dbReference type="ChEBI" id="CHEBI:18420"/>
    </ligand>
</feature>
<feature type="site" description="ATP" evidence="1">
    <location>
        <position position="36"/>
    </location>
</feature>
<comment type="function">
    <text evidence="1">A protein kinase that phosphorylates Ser and Thr residues. Probably acts to suppress the effects of stress linked to accumulation of reactive oxygen species. Probably involved in the extracytoplasmic stress response.</text>
</comment>
<comment type="catalytic activity">
    <reaction evidence="1">
        <text>L-seryl-[protein] + ATP = O-phospho-L-seryl-[protein] + ADP + H(+)</text>
        <dbReference type="Rhea" id="RHEA:17989"/>
        <dbReference type="Rhea" id="RHEA-COMP:9863"/>
        <dbReference type="Rhea" id="RHEA-COMP:11604"/>
        <dbReference type="ChEBI" id="CHEBI:15378"/>
        <dbReference type="ChEBI" id="CHEBI:29999"/>
        <dbReference type="ChEBI" id="CHEBI:30616"/>
        <dbReference type="ChEBI" id="CHEBI:83421"/>
        <dbReference type="ChEBI" id="CHEBI:456216"/>
        <dbReference type="EC" id="2.7.11.1"/>
    </reaction>
</comment>
<comment type="catalytic activity">
    <reaction evidence="1">
        <text>L-threonyl-[protein] + ATP = O-phospho-L-threonyl-[protein] + ADP + H(+)</text>
        <dbReference type="Rhea" id="RHEA:46608"/>
        <dbReference type="Rhea" id="RHEA-COMP:11060"/>
        <dbReference type="Rhea" id="RHEA-COMP:11605"/>
        <dbReference type="ChEBI" id="CHEBI:15378"/>
        <dbReference type="ChEBI" id="CHEBI:30013"/>
        <dbReference type="ChEBI" id="CHEBI:30616"/>
        <dbReference type="ChEBI" id="CHEBI:61977"/>
        <dbReference type="ChEBI" id="CHEBI:456216"/>
        <dbReference type="EC" id="2.7.11.1"/>
    </reaction>
</comment>
<comment type="cofactor">
    <cofactor evidence="1">
        <name>Mg(2+)</name>
        <dbReference type="ChEBI" id="CHEBI:18420"/>
    </cofactor>
</comment>
<comment type="subunit">
    <text evidence="1">Monomer.</text>
</comment>
<comment type="subcellular location">
    <subcellularLocation>
        <location evidence="1">Cytoplasm</location>
    </subcellularLocation>
</comment>
<comment type="similarity">
    <text evidence="1">Belongs to the SrkA/RdoA protein kinase family.</text>
</comment>
<name>SRKA_SALCH</name>
<proteinExistence type="inferred from homology"/>
<reference key="1">
    <citation type="journal article" date="2005" name="Nucleic Acids Res.">
        <title>The genome sequence of Salmonella enterica serovar Choleraesuis, a highly invasive and resistant zoonotic pathogen.</title>
        <authorList>
            <person name="Chiu C.-H."/>
            <person name="Tang P."/>
            <person name="Chu C."/>
            <person name="Hu S."/>
            <person name="Bao Q."/>
            <person name="Yu J."/>
            <person name="Chou Y.-Y."/>
            <person name="Wang H.-S."/>
            <person name="Lee Y.-S."/>
        </authorList>
    </citation>
    <scope>NUCLEOTIDE SEQUENCE [LARGE SCALE GENOMIC DNA]</scope>
    <source>
        <strain>SC-B67</strain>
    </source>
</reference>
<organism>
    <name type="scientific">Salmonella choleraesuis (strain SC-B67)</name>
    <dbReference type="NCBI Taxonomy" id="321314"/>
    <lineage>
        <taxon>Bacteria</taxon>
        <taxon>Pseudomonadati</taxon>
        <taxon>Pseudomonadota</taxon>
        <taxon>Gammaproteobacteria</taxon>
        <taxon>Enterobacterales</taxon>
        <taxon>Enterobacteriaceae</taxon>
        <taxon>Salmonella</taxon>
    </lineage>
</organism>
<protein>
    <recommendedName>
        <fullName evidence="1">Stress response kinase A</fullName>
        <ecNumber evidence="1">2.7.11.1</ecNumber>
    </recommendedName>
    <alternativeName>
        <fullName evidence="1">Serine/threonine-protein kinase SrkA</fullName>
    </alternativeName>
</protein>
<gene>
    <name evidence="1" type="primary">srkA</name>
    <name type="ordered locus">SCH_3889</name>
</gene>
<dbReference type="EC" id="2.7.11.1" evidence="1"/>
<dbReference type="EMBL" id="AE017220">
    <property type="protein sequence ID" value="AAX67795.1"/>
    <property type="molecule type" value="Genomic_DNA"/>
</dbReference>
<dbReference type="RefSeq" id="WP_000999261.1">
    <property type="nucleotide sequence ID" value="NC_006905.1"/>
</dbReference>
<dbReference type="SMR" id="Q57HL7"/>
<dbReference type="KEGG" id="sec:SCH_3889"/>
<dbReference type="HOGENOM" id="CLU_054715_0_0_6"/>
<dbReference type="Proteomes" id="UP000000538">
    <property type="component" value="Chromosome"/>
</dbReference>
<dbReference type="GO" id="GO:0005737">
    <property type="term" value="C:cytoplasm"/>
    <property type="evidence" value="ECO:0007669"/>
    <property type="project" value="UniProtKB-SubCell"/>
</dbReference>
<dbReference type="GO" id="GO:0005524">
    <property type="term" value="F:ATP binding"/>
    <property type="evidence" value="ECO:0007669"/>
    <property type="project" value="UniProtKB-UniRule"/>
</dbReference>
<dbReference type="GO" id="GO:0000287">
    <property type="term" value="F:magnesium ion binding"/>
    <property type="evidence" value="ECO:0007669"/>
    <property type="project" value="UniProtKB-UniRule"/>
</dbReference>
<dbReference type="GO" id="GO:0106310">
    <property type="term" value="F:protein serine kinase activity"/>
    <property type="evidence" value="ECO:0007669"/>
    <property type="project" value="RHEA"/>
</dbReference>
<dbReference type="GO" id="GO:0004674">
    <property type="term" value="F:protein serine/threonine kinase activity"/>
    <property type="evidence" value="ECO:0007669"/>
    <property type="project" value="UniProtKB-UniRule"/>
</dbReference>
<dbReference type="Gene3D" id="1.20.1270.170">
    <property type="match status" value="1"/>
</dbReference>
<dbReference type="Gene3D" id="3.30.200.70">
    <property type="match status" value="1"/>
</dbReference>
<dbReference type="Gene3D" id="1.10.510.10">
    <property type="entry name" value="Transferase(Phosphotransferase) domain 1"/>
    <property type="match status" value="1"/>
</dbReference>
<dbReference type="HAMAP" id="MF_01497">
    <property type="entry name" value="SrkA_kinase"/>
    <property type="match status" value="1"/>
</dbReference>
<dbReference type="InterPro" id="IPR002575">
    <property type="entry name" value="Aminoglycoside_PTrfase"/>
</dbReference>
<dbReference type="InterPro" id="IPR011009">
    <property type="entry name" value="Kinase-like_dom_sf"/>
</dbReference>
<dbReference type="InterPro" id="IPR032882">
    <property type="entry name" value="SrkA/RdoA"/>
</dbReference>
<dbReference type="NCBIfam" id="NF008738">
    <property type="entry name" value="PRK11768.1"/>
    <property type="match status" value="1"/>
</dbReference>
<dbReference type="PANTHER" id="PTHR39573">
    <property type="entry name" value="STRESS RESPONSE KINASE A"/>
    <property type="match status" value="1"/>
</dbReference>
<dbReference type="PANTHER" id="PTHR39573:SF1">
    <property type="entry name" value="STRESS RESPONSE KINASE A"/>
    <property type="match status" value="1"/>
</dbReference>
<dbReference type="Pfam" id="PF01636">
    <property type="entry name" value="APH"/>
    <property type="match status" value="1"/>
</dbReference>
<dbReference type="SUPFAM" id="SSF56112">
    <property type="entry name" value="Protein kinase-like (PK-like)"/>
    <property type="match status" value="1"/>
</dbReference>
<sequence length="328" mass="38168">MNDNAFTFQTLHPETIMDALFEQGIRVDSGLTPLNSYENRVYQFQDEDRRRFVVKFYRPERWSVDQIREEHQFALELVKDEVPVAAPLAFNGQTLLAHQGYHYAIFPSVGGRQFEADNIDQMEAVGRYLGRLHQTGRKRPFTFRPDIGLAEYLFEPRQVFEDAALIPSGQKAAFLKATDTLLSAVTECWRTDFATLRLHGDCHAGNILWRDGPLFVDLDDARNGPAIQDLWMLLNGDKAEQRMQLETIIEAYEEISEFDTAEIGLIEPLRAMRLVYYLAWLIRRWGDPAFPKNFPWLTGEDYWQRQTTTFIEQTKILHEPPLQLTPMY</sequence>
<keyword id="KW-0067">ATP-binding</keyword>
<keyword id="KW-0963">Cytoplasm</keyword>
<keyword id="KW-0418">Kinase</keyword>
<keyword id="KW-0460">Magnesium</keyword>
<keyword id="KW-0479">Metal-binding</keyword>
<keyword id="KW-0547">Nucleotide-binding</keyword>
<keyword id="KW-0597">Phosphoprotein</keyword>
<keyword id="KW-0723">Serine/threonine-protein kinase</keyword>
<keyword id="KW-0346">Stress response</keyword>
<keyword id="KW-0808">Transferase</keyword>
<accession>Q57HL7</accession>
<evidence type="ECO:0000255" key="1">
    <source>
        <dbReference type="HAMAP-Rule" id="MF_01497"/>
    </source>
</evidence>